<feature type="transit peptide" description="Mitochondrion" evidence="1">
    <location>
        <begin position="1"/>
        <end position="8"/>
    </location>
</feature>
<feature type="chain" id="PRO_0000022175" description="Protein PET122, mitochondrial">
    <location>
        <begin position="9"/>
        <end position="260"/>
    </location>
</feature>
<organism>
    <name type="scientific">Saccharomyces bayanus</name>
    <name type="common">Yeast</name>
    <name type="synonym">Saccharomyces uvarum x Saccharomyces eubayanus</name>
    <dbReference type="NCBI Taxonomy" id="4931"/>
    <lineage>
        <taxon>Eukaryota</taxon>
        <taxon>Fungi</taxon>
        <taxon>Dikarya</taxon>
        <taxon>Ascomycota</taxon>
        <taxon>Saccharomycotina</taxon>
        <taxon>Saccharomycetes</taxon>
        <taxon>Saccharomycetales</taxon>
        <taxon>Saccharomycetaceae</taxon>
        <taxon>Saccharomyces</taxon>
    </lineage>
</organism>
<proteinExistence type="inferred from homology"/>
<dbReference type="EMBL" id="AF026394">
    <property type="protein sequence ID" value="AAB82600.1"/>
    <property type="molecule type" value="Genomic_DNA"/>
</dbReference>
<dbReference type="SMR" id="O13374"/>
<dbReference type="GO" id="GO:0005743">
    <property type="term" value="C:mitochondrial inner membrane"/>
    <property type="evidence" value="ECO:0007669"/>
    <property type="project" value="UniProtKB-SubCell"/>
</dbReference>
<dbReference type="GO" id="GO:0003743">
    <property type="term" value="F:translation initiation factor activity"/>
    <property type="evidence" value="ECO:0007669"/>
    <property type="project" value="InterPro"/>
</dbReference>
<dbReference type="GO" id="GO:0070131">
    <property type="term" value="P:positive regulation of mitochondrial translation"/>
    <property type="evidence" value="ECO:0007669"/>
    <property type="project" value="InterPro"/>
</dbReference>
<dbReference type="InterPro" id="IPR008732">
    <property type="entry name" value="Pet122"/>
</dbReference>
<dbReference type="Pfam" id="PF05476">
    <property type="entry name" value="PET122"/>
    <property type="match status" value="1"/>
</dbReference>
<dbReference type="PIRSF" id="PIRSF003326">
    <property type="entry name" value="PET122"/>
    <property type="match status" value="1"/>
</dbReference>
<comment type="function">
    <text evidence="1">Required for expression of the mitochondrial gene for cytochrome c oxidase subunit 3 (COX3). PET122 seems to work by directly interacting with the small ribosomal subunit to promote translation initiation on the COX3 mRNA (By similarity).</text>
</comment>
<comment type="subcellular location">
    <subcellularLocation>
        <location evidence="1">Mitochondrion inner membrane</location>
        <topology evidence="1">Peripheral membrane protein</topology>
    </subcellularLocation>
</comment>
<sequence>MLSITRRLMGTDVRSRLLLSSLNGDMPGALLLLRQQQQASMDVELLHTVLARATALAHVETIAYVWYHHVQPRRLAVEGRLLCDMAGVALHQDKLFLPAQFLQHHQTMGLGRGTSASASAEAQAVEFELRRVKVEAFARGTMHSTALSEKWKVFLQEMDTLPGQPPLRLRDFPQLARAVGVAAQLQQPQEQAAALALFGRQPLVVKNEWSLPLLLSAVLWHVPGPAQARRVLAEFRQCYRGLPLTDAEVVIKRRGFEIDT</sequence>
<protein>
    <recommendedName>
        <fullName>Protein PET122, mitochondrial</fullName>
    </recommendedName>
</protein>
<accession>O13374</accession>
<reference key="1">
    <citation type="journal article" date="2000" name="Genetics">
        <title>Highly diverged homologs of Saccharomyces cerevisiae mitochondrial mRNA-specific translational activators have orthologous functions in other budding yeasts.</title>
        <authorList>
            <person name="Costanzo M.C."/>
            <person name="Bonnefoy N."/>
            <person name="Williams E.H."/>
            <person name="Clark-Walker G.D."/>
            <person name="Fox T.D."/>
        </authorList>
    </citation>
    <scope>NUCLEOTIDE SEQUENCE [GENOMIC DNA]</scope>
    <source>
        <strain>ATCC 76513 / CBS 380 / DSM 70412 / JCM 7258 / NBRC 1127 / NRRL Y-12624</strain>
    </source>
</reference>
<name>PT122_SACBA</name>
<gene>
    <name type="primary">PET122</name>
</gene>
<keyword id="KW-0010">Activator</keyword>
<keyword id="KW-0472">Membrane</keyword>
<keyword id="KW-0496">Mitochondrion</keyword>
<keyword id="KW-0999">Mitochondrion inner membrane</keyword>
<keyword id="KW-0809">Transit peptide</keyword>
<keyword id="KW-0810">Translation regulation</keyword>
<evidence type="ECO:0000250" key="1"/>